<accession>A7GW82</accession>
<comment type="similarity">
    <text evidence="1">Belongs to the bacterial ribosomal protein bS21 family.</text>
</comment>
<keyword id="KW-1185">Reference proteome</keyword>
<keyword id="KW-0687">Ribonucleoprotein</keyword>
<keyword id="KW-0689">Ribosomal protein</keyword>
<proteinExistence type="inferred from homology"/>
<gene>
    <name evidence="1" type="primary">rpsU</name>
    <name type="ordered locus">Ccur92_01700</name>
    <name type="ORF">CCV52592_1544</name>
</gene>
<name>RS21_CAMC5</name>
<sequence length="70" mass="8687">MPGIKVHPNESFDEAYRKFKKQVDRNLIVTEVRARRFFEPMTEIRKKQKISARKKMLKRLYMLRRYESRL</sequence>
<reference key="1">
    <citation type="submission" date="2007-07" db="EMBL/GenBank/DDBJ databases">
        <title>Genome sequence of Campylobacter curvus 525.92 isolated from human feces.</title>
        <authorList>
            <person name="Fouts D.E."/>
            <person name="Mongodin E.F."/>
            <person name="Puiu D."/>
            <person name="Sebastian Y."/>
            <person name="Miller W.G."/>
            <person name="Mandrell R.E."/>
            <person name="Lastovica A.J."/>
            <person name="Nelson K.E."/>
        </authorList>
    </citation>
    <scope>NUCLEOTIDE SEQUENCE [LARGE SCALE GENOMIC DNA]</scope>
    <source>
        <strain>525.92</strain>
    </source>
</reference>
<protein>
    <recommendedName>
        <fullName evidence="1">Small ribosomal subunit protein bS21</fullName>
    </recommendedName>
    <alternativeName>
        <fullName evidence="2">30S ribosomal protein S21</fullName>
    </alternativeName>
</protein>
<dbReference type="EMBL" id="CP000767">
    <property type="protein sequence ID" value="EAU00574.1"/>
    <property type="molecule type" value="Genomic_DNA"/>
</dbReference>
<dbReference type="RefSeq" id="WP_009649620.1">
    <property type="nucleotide sequence ID" value="NC_009715.2"/>
</dbReference>
<dbReference type="SMR" id="A7GW82"/>
<dbReference type="STRING" id="360105.CCV52592_1544"/>
<dbReference type="GeneID" id="61001462"/>
<dbReference type="KEGG" id="ccv:CCV52592_1544"/>
<dbReference type="HOGENOM" id="CLU_159258_1_1_7"/>
<dbReference type="OrthoDB" id="9799244at2"/>
<dbReference type="Proteomes" id="UP000006380">
    <property type="component" value="Chromosome"/>
</dbReference>
<dbReference type="GO" id="GO:1990904">
    <property type="term" value="C:ribonucleoprotein complex"/>
    <property type="evidence" value="ECO:0007669"/>
    <property type="project" value="UniProtKB-KW"/>
</dbReference>
<dbReference type="GO" id="GO:0005840">
    <property type="term" value="C:ribosome"/>
    <property type="evidence" value="ECO:0007669"/>
    <property type="project" value="UniProtKB-KW"/>
</dbReference>
<dbReference type="GO" id="GO:0003735">
    <property type="term" value="F:structural constituent of ribosome"/>
    <property type="evidence" value="ECO:0007669"/>
    <property type="project" value="InterPro"/>
</dbReference>
<dbReference type="GO" id="GO:0006412">
    <property type="term" value="P:translation"/>
    <property type="evidence" value="ECO:0007669"/>
    <property type="project" value="UniProtKB-UniRule"/>
</dbReference>
<dbReference type="Gene3D" id="1.20.5.1150">
    <property type="entry name" value="Ribosomal protein S8"/>
    <property type="match status" value="1"/>
</dbReference>
<dbReference type="HAMAP" id="MF_00358">
    <property type="entry name" value="Ribosomal_bS21"/>
    <property type="match status" value="1"/>
</dbReference>
<dbReference type="InterPro" id="IPR001911">
    <property type="entry name" value="Ribosomal_bS21"/>
</dbReference>
<dbReference type="InterPro" id="IPR038380">
    <property type="entry name" value="Ribosomal_bS21_sf"/>
</dbReference>
<dbReference type="NCBIfam" id="TIGR00030">
    <property type="entry name" value="S21p"/>
    <property type="match status" value="1"/>
</dbReference>
<dbReference type="Pfam" id="PF01165">
    <property type="entry name" value="Ribosomal_S21"/>
    <property type="match status" value="1"/>
</dbReference>
<dbReference type="PRINTS" id="PR00976">
    <property type="entry name" value="RIBOSOMALS21"/>
</dbReference>
<feature type="chain" id="PRO_1000005102" description="Small ribosomal subunit protein bS21">
    <location>
        <begin position="1"/>
        <end position="70"/>
    </location>
</feature>
<organism>
    <name type="scientific">Campylobacter curvus (strain 525.92)</name>
    <dbReference type="NCBI Taxonomy" id="360105"/>
    <lineage>
        <taxon>Bacteria</taxon>
        <taxon>Pseudomonadati</taxon>
        <taxon>Campylobacterota</taxon>
        <taxon>Epsilonproteobacteria</taxon>
        <taxon>Campylobacterales</taxon>
        <taxon>Campylobacteraceae</taxon>
        <taxon>Campylobacter</taxon>
    </lineage>
</organism>
<evidence type="ECO:0000255" key="1">
    <source>
        <dbReference type="HAMAP-Rule" id="MF_00358"/>
    </source>
</evidence>
<evidence type="ECO:0000305" key="2"/>